<feature type="chain" id="PRO_0000093739" description="GMP reductase">
    <location>
        <begin position="1"/>
        <end position="347"/>
    </location>
</feature>
<feature type="active site" description="Thioimidate intermediate" evidence="1">
    <location>
        <position position="186"/>
    </location>
</feature>
<feature type="binding site" evidence="1">
    <location>
        <begin position="108"/>
        <end position="131"/>
    </location>
    <ligand>
        <name>NADP(+)</name>
        <dbReference type="ChEBI" id="CHEBI:58349"/>
    </ligand>
</feature>
<feature type="binding site" evidence="1">
    <location>
        <position position="181"/>
    </location>
    <ligand>
        <name>K(+)</name>
        <dbReference type="ChEBI" id="CHEBI:29103"/>
    </ligand>
</feature>
<feature type="binding site" evidence="1">
    <location>
        <position position="183"/>
    </location>
    <ligand>
        <name>K(+)</name>
        <dbReference type="ChEBI" id="CHEBI:29103"/>
    </ligand>
</feature>
<feature type="binding site" evidence="1">
    <location>
        <begin position="216"/>
        <end position="239"/>
    </location>
    <ligand>
        <name>NADP(+)</name>
        <dbReference type="ChEBI" id="CHEBI:58349"/>
    </ligand>
</feature>
<dbReference type="EC" id="1.7.1.7" evidence="1"/>
<dbReference type="EMBL" id="AE006468">
    <property type="protein sequence ID" value="AAL19105.1"/>
    <property type="molecule type" value="Genomic_DNA"/>
</dbReference>
<dbReference type="RefSeq" id="NP_459146.1">
    <property type="nucleotide sequence ID" value="NC_003197.2"/>
</dbReference>
<dbReference type="RefSeq" id="WP_001217365.1">
    <property type="nucleotide sequence ID" value="NC_003197.2"/>
</dbReference>
<dbReference type="SMR" id="Q8ZRT5"/>
<dbReference type="STRING" id="99287.STM0141"/>
<dbReference type="PaxDb" id="99287-STM0141"/>
<dbReference type="GeneID" id="1251659"/>
<dbReference type="KEGG" id="stm:STM0141"/>
<dbReference type="PATRIC" id="fig|99287.12.peg.150"/>
<dbReference type="HOGENOM" id="CLU_022552_5_3_6"/>
<dbReference type="OMA" id="AYKEYFG"/>
<dbReference type="PhylomeDB" id="Q8ZRT5"/>
<dbReference type="BioCyc" id="SENT99287:STM0141-MONOMER"/>
<dbReference type="Proteomes" id="UP000001014">
    <property type="component" value="Chromosome"/>
</dbReference>
<dbReference type="GO" id="GO:0005829">
    <property type="term" value="C:cytosol"/>
    <property type="evidence" value="ECO:0000318"/>
    <property type="project" value="GO_Central"/>
</dbReference>
<dbReference type="GO" id="GO:1902560">
    <property type="term" value="C:GMP reductase complex"/>
    <property type="evidence" value="ECO:0007669"/>
    <property type="project" value="InterPro"/>
</dbReference>
<dbReference type="GO" id="GO:0003920">
    <property type="term" value="F:GMP reductase activity"/>
    <property type="evidence" value="ECO:0007669"/>
    <property type="project" value="UniProtKB-UniRule"/>
</dbReference>
<dbReference type="GO" id="GO:0046872">
    <property type="term" value="F:metal ion binding"/>
    <property type="evidence" value="ECO:0007669"/>
    <property type="project" value="UniProtKB-KW"/>
</dbReference>
<dbReference type="GO" id="GO:0006163">
    <property type="term" value="P:purine nucleotide metabolic process"/>
    <property type="evidence" value="ECO:0007669"/>
    <property type="project" value="UniProtKB-UniRule"/>
</dbReference>
<dbReference type="CDD" id="cd00381">
    <property type="entry name" value="IMPDH"/>
    <property type="match status" value="1"/>
</dbReference>
<dbReference type="FunFam" id="3.20.20.70:FF:000012">
    <property type="entry name" value="GMP reductase"/>
    <property type="match status" value="1"/>
</dbReference>
<dbReference type="Gene3D" id="3.20.20.70">
    <property type="entry name" value="Aldolase class I"/>
    <property type="match status" value="1"/>
</dbReference>
<dbReference type="HAMAP" id="MF_00596">
    <property type="entry name" value="GMP_reduct_type1"/>
    <property type="match status" value="1"/>
</dbReference>
<dbReference type="InterPro" id="IPR013785">
    <property type="entry name" value="Aldolase_TIM"/>
</dbReference>
<dbReference type="InterPro" id="IPR050139">
    <property type="entry name" value="GMP_reductase"/>
</dbReference>
<dbReference type="InterPro" id="IPR005993">
    <property type="entry name" value="GMPR"/>
</dbReference>
<dbReference type="InterPro" id="IPR015875">
    <property type="entry name" value="IMP_DH/GMP_Rdtase_CS"/>
</dbReference>
<dbReference type="InterPro" id="IPR001093">
    <property type="entry name" value="IMP_DH_GMPRt"/>
</dbReference>
<dbReference type="NCBIfam" id="TIGR01305">
    <property type="entry name" value="GMP_reduct_1"/>
    <property type="match status" value="1"/>
</dbReference>
<dbReference type="NCBIfam" id="NF003470">
    <property type="entry name" value="PRK05096.1"/>
    <property type="match status" value="1"/>
</dbReference>
<dbReference type="PANTHER" id="PTHR43170">
    <property type="entry name" value="GMP REDUCTASE"/>
    <property type="match status" value="1"/>
</dbReference>
<dbReference type="PANTHER" id="PTHR43170:SF5">
    <property type="entry name" value="GMP REDUCTASE"/>
    <property type="match status" value="1"/>
</dbReference>
<dbReference type="Pfam" id="PF00478">
    <property type="entry name" value="IMPDH"/>
    <property type="match status" value="1"/>
</dbReference>
<dbReference type="PIRSF" id="PIRSF000235">
    <property type="entry name" value="GMP_reductase"/>
    <property type="match status" value="1"/>
</dbReference>
<dbReference type="SMART" id="SM01240">
    <property type="entry name" value="IMPDH"/>
    <property type="match status" value="1"/>
</dbReference>
<dbReference type="SUPFAM" id="SSF51412">
    <property type="entry name" value="Inosine monophosphate dehydrogenase (IMPDH)"/>
    <property type="match status" value="1"/>
</dbReference>
<dbReference type="PROSITE" id="PS00487">
    <property type="entry name" value="IMP_DH_GMP_RED"/>
    <property type="match status" value="1"/>
</dbReference>
<reference key="1">
    <citation type="journal article" date="2001" name="Nature">
        <title>Complete genome sequence of Salmonella enterica serovar Typhimurium LT2.</title>
        <authorList>
            <person name="McClelland M."/>
            <person name="Sanderson K.E."/>
            <person name="Spieth J."/>
            <person name="Clifton S.W."/>
            <person name="Latreille P."/>
            <person name="Courtney L."/>
            <person name="Porwollik S."/>
            <person name="Ali J."/>
            <person name="Dante M."/>
            <person name="Du F."/>
            <person name="Hou S."/>
            <person name="Layman D."/>
            <person name="Leonard S."/>
            <person name="Nguyen C."/>
            <person name="Scott K."/>
            <person name="Holmes A."/>
            <person name="Grewal N."/>
            <person name="Mulvaney E."/>
            <person name="Ryan E."/>
            <person name="Sun H."/>
            <person name="Florea L."/>
            <person name="Miller W."/>
            <person name="Stoneking T."/>
            <person name="Nhan M."/>
            <person name="Waterston R."/>
            <person name="Wilson R.K."/>
        </authorList>
    </citation>
    <scope>NUCLEOTIDE SEQUENCE [LARGE SCALE GENOMIC DNA]</scope>
    <source>
        <strain>LT2 / SGSC1412 / ATCC 700720</strain>
    </source>
</reference>
<name>GUAC_SALTY</name>
<keyword id="KW-0479">Metal-binding</keyword>
<keyword id="KW-0521">NADP</keyword>
<keyword id="KW-0560">Oxidoreductase</keyword>
<keyword id="KW-0630">Potassium</keyword>
<keyword id="KW-1185">Reference proteome</keyword>
<comment type="function">
    <text evidence="1">Catalyzes the irreversible NADPH-dependent deamination of GMP to IMP. It functions in the conversion of nucleobase, nucleoside and nucleotide derivatives of G to A nucleotides, and in maintaining the intracellular balance of A and G nucleotides.</text>
</comment>
<comment type="catalytic activity">
    <reaction evidence="1">
        <text>IMP + NH4(+) + NADP(+) = GMP + NADPH + 2 H(+)</text>
        <dbReference type="Rhea" id="RHEA:17185"/>
        <dbReference type="ChEBI" id="CHEBI:15378"/>
        <dbReference type="ChEBI" id="CHEBI:28938"/>
        <dbReference type="ChEBI" id="CHEBI:57783"/>
        <dbReference type="ChEBI" id="CHEBI:58053"/>
        <dbReference type="ChEBI" id="CHEBI:58115"/>
        <dbReference type="ChEBI" id="CHEBI:58349"/>
        <dbReference type="EC" id="1.7.1.7"/>
    </reaction>
</comment>
<comment type="subunit">
    <text evidence="1">Homotetramer.</text>
</comment>
<comment type="similarity">
    <text evidence="1">Belongs to the IMPDH/GMPR family. GuaC type 1 subfamily.</text>
</comment>
<sequence>MRIEEDLKLGFKDVLIRPKRSTLKSRSDVELERQFTFKHSGQTWSGVPIIAANMDTVGTFEMAQALAGFDILTAVHKHYTVEEWAAFINTASADVLKHVMVSTGTSDADFEKTVQILALNPALNFVCIDVANGYSEHFVQFVAKAREAWPTKTICAGNVVTGEMCEELILSGADIVKVGIGPGSVCTTRVKTGVGYPQLSAVIECADAAHGLGGMIVSDGGCTMPGDVAKAFGGGADFVMLGGMLAGHEESGGSVVEENGEKFMLFYGMSSESAMNRHVGGVAKYRAAEGKTVKLPLRGPVGNTARDILGGLRSACTYVGASRLKELTKRTTFIRVQEQENRIFNSL</sequence>
<protein>
    <recommendedName>
        <fullName evidence="1">GMP reductase</fullName>
        <ecNumber evidence="1">1.7.1.7</ecNumber>
    </recommendedName>
    <alternativeName>
        <fullName evidence="1">Guanosine 5'-monophosphate oxidoreductase</fullName>
        <shortName evidence="1">Guanosine monophosphate reductase</shortName>
    </alternativeName>
</protein>
<gene>
    <name evidence="1" type="primary">guaC</name>
    <name type="ordered locus">STM0141</name>
</gene>
<proteinExistence type="inferred from homology"/>
<accession>Q8ZRT5</accession>
<organism>
    <name type="scientific">Salmonella typhimurium (strain LT2 / SGSC1412 / ATCC 700720)</name>
    <dbReference type="NCBI Taxonomy" id="99287"/>
    <lineage>
        <taxon>Bacteria</taxon>
        <taxon>Pseudomonadati</taxon>
        <taxon>Pseudomonadota</taxon>
        <taxon>Gammaproteobacteria</taxon>
        <taxon>Enterobacterales</taxon>
        <taxon>Enterobacteriaceae</taxon>
        <taxon>Salmonella</taxon>
    </lineage>
</organism>
<evidence type="ECO:0000255" key="1">
    <source>
        <dbReference type="HAMAP-Rule" id="MF_00596"/>
    </source>
</evidence>